<keyword id="KW-0997">Cell inner membrane</keyword>
<keyword id="KW-1003">Cell membrane</keyword>
<keyword id="KW-0249">Electron transport</keyword>
<keyword id="KW-0472">Membrane</keyword>
<keyword id="KW-1185">Reference proteome</keyword>
<keyword id="KW-1278">Translocase</keyword>
<keyword id="KW-0812">Transmembrane</keyword>
<keyword id="KW-1133">Transmembrane helix</keyword>
<keyword id="KW-0813">Transport</keyword>
<gene>
    <name evidence="1" type="primary">rnfA</name>
    <name type="ordered locus">ABO_1609</name>
</gene>
<reference key="1">
    <citation type="journal article" date="2006" name="Nat. Biotechnol.">
        <title>Genome sequence of the ubiquitous hydrocarbon-degrading marine bacterium Alcanivorax borkumensis.</title>
        <authorList>
            <person name="Schneiker S."/>
            <person name="Martins dos Santos V.A.P."/>
            <person name="Bartels D."/>
            <person name="Bekel T."/>
            <person name="Brecht M."/>
            <person name="Buhrmester J."/>
            <person name="Chernikova T.N."/>
            <person name="Denaro R."/>
            <person name="Ferrer M."/>
            <person name="Gertler C."/>
            <person name="Goesmann A."/>
            <person name="Golyshina O.V."/>
            <person name="Kaminski F."/>
            <person name="Khachane A.N."/>
            <person name="Lang S."/>
            <person name="Linke B."/>
            <person name="McHardy A.C."/>
            <person name="Meyer F."/>
            <person name="Nechitaylo T."/>
            <person name="Puehler A."/>
            <person name="Regenhardt D."/>
            <person name="Rupp O."/>
            <person name="Sabirova J.S."/>
            <person name="Selbitschka W."/>
            <person name="Yakimov M.M."/>
            <person name="Timmis K.N."/>
            <person name="Vorhoelter F.-J."/>
            <person name="Weidner S."/>
            <person name="Kaiser O."/>
            <person name="Golyshin P.N."/>
        </authorList>
    </citation>
    <scope>NUCLEOTIDE SEQUENCE [LARGE SCALE GENOMIC DNA]</scope>
    <source>
        <strain>ATCC 700651 / DSM 11573 / NCIMB 13689 / SK2</strain>
    </source>
</reference>
<name>RNFA_ALCBS</name>
<proteinExistence type="inferred from homology"/>
<sequence length="194" mass="21044">MTEYVLILISAVLVNNFVLVQFLGLCPFMGVSNKVETAMGMSLATTFVLTLSSVLAYLTWAYILVPFELEYLRTISFILVIAVAVQFTEMFVKKASPLLYRVLGVFLPLITSNCAVLGVALLNVRQEDATFMSSLTYGFGAAIGFSLVLILFAAMRERIAVADVPEAFRGPSIGLITAGLMSLAFMGFSGLIKL</sequence>
<protein>
    <recommendedName>
        <fullName evidence="1">Ion-translocating oxidoreductase complex subunit A</fullName>
        <ecNumber evidence="1">7.-.-.-</ecNumber>
    </recommendedName>
    <alternativeName>
        <fullName evidence="1">Rnf electron transport complex subunit A</fullName>
    </alternativeName>
</protein>
<accession>Q0VP41</accession>
<dbReference type="EC" id="7.-.-.-" evidence="1"/>
<dbReference type="EMBL" id="AM286690">
    <property type="protein sequence ID" value="CAL17057.1"/>
    <property type="molecule type" value="Genomic_DNA"/>
</dbReference>
<dbReference type="SMR" id="Q0VP41"/>
<dbReference type="STRING" id="393595.ABO_1609"/>
<dbReference type="KEGG" id="abo:ABO_1609"/>
<dbReference type="eggNOG" id="COG4657">
    <property type="taxonomic scope" value="Bacteria"/>
</dbReference>
<dbReference type="HOGENOM" id="CLU_095255_1_0_6"/>
<dbReference type="OrthoDB" id="9803631at2"/>
<dbReference type="Proteomes" id="UP000008871">
    <property type="component" value="Chromosome"/>
</dbReference>
<dbReference type="GO" id="GO:0005886">
    <property type="term" value="C:plasma membrane"/>
    <property type="evidence" value="ECO:0007669"/>
    <property type="project" value="UniProtKB-SubCell"/>
</dbReference>
<dbReference type="GO" id="GO:0022900">
    <property type="term" value="P:electron transport chain"/>
    <property type="evidence" value="ECO:0007669"/>
    <property type="project" value="UniProtKB-UniRule"/>
</dbReference>
<dbReference type="HAMAP" id="MF_00459">
    <property type="entry name" value="RsxA_RnfA"/>
    <property type="match status" value="1"/>
</dbReference>
<dbReference type="InterPro" id="IPR011293">
    <property type="entry name" value="Ion_transpt_RnfA/RsxA"/>
</dbReference>
<dbReference type="InterPro" id="IPR003667">
    <property type="entry name" value="NqrDE/RnfAE"/>
</dbReference>
<dbReference type="InterPro" id="IPR050133">
    <property type="entry name" value="NqrDE/RnfAE_oxidrdctase"/>
</dbReference>
<dbReference type="NCBIfam" id="NF003481">
    <property type="entry name" value="PRK05151.1"/>
    <property type="match status" value="1"/>
</dbReference>
<dbReference type="NCBIfam" id="TIGR01943">
    <property type="entry name" value="rnfA"/>
    <property type="match status" value="1"/>
</dbReference>
<dbReference type="PANTHER" id="PTHR30335">
    <property type="entry name" value="INTEGRAL MEMBRANE PROTEIN OF SOXR-REDUCING COMPLEX"/>
    <property type="match status" value="1"/>
</dbReference>
<dbReference type="PANTHER" id="PTHR30335:SF0">
    <property type="entry name" value="ION-TRANSLOCATING OXIDOREDUCTASE COMPLEX SUBUNIT A"/>
    <property type="match status" value="1"/>
</dbReference>
<dbReference type="Pfam" id="PF02508">
    <property type="entry name" value="Rnf-Nqr"/>
    <property type="match status" value="1"/>
</dbReference>
<dbReference type="PIRSF" id="PIRSF006102">
    <property type="entry name" value="NQR_DE"/>
    <property type="match status" value="1"/>
</dbReference>
<evidence type="ECO:0000255" key="1">
    <source>
        <dbReference type="HAMAP-Rule" id="MF_00459"/>
    </source>
</evidence>
<feature type="chain" id="PRO_1000013521" description="Ion-translocating oxidoreductase complex subunit A">
    <location>
        <begin position="1"/>
        <end position="194"/>
    </location>
</feature>
<feature type="transmembrane region" description="Helical" evidence="1">
    <location>
        <begin position="5"/>
        <end position="25"/>
    </location>
</feature>
<feature type="transmembrane region" description="Helical" evidence="1">
    <location>
        <begin position="47"/>
        <end position="67"/>
    </location>
</feature>
<feature type="transmembrane region" description="Helical" evidence="1">
    <location>
        <begin position="72"/>
        <end position="92"/>
    </location>
</feature>
<feature type="transmembrane region" description="Helical" evidence="1">
    <location>
        <begin position="102"/>
        <end position="122"/>
    </location>
</feature>
<feature type="transmembrane region" description="Helical" evidence="1">
    <location>
        <begin position="135"/>
        <end position="155"/>
    </location>
</feature>
<feature type="transmembrane region" description="Helical" evidence="1">
    <location>
        <begin position="172"/>
        <end position="192"/>
    </location>
</feature>
<organism>
    <name type="scientific">Alcanivorax borkumensis (strain ATCC 700651 / DSM 11573 / NCIMB 13689 / SK2)</name>
    <dbReference type="NCBI Taxonomy" id="393595"/>
    <lineage>
        <taxon>Bacteria</taxon>
        <taxon>Pseudomonadati</taxon>
        <taxon>Pseudomonadota</taxon>
        <taxon>Gammaproteobacteria</taxon>
        <taxon>Oceanospirillales</taxon>
        <taxon>Alcanivoracaceae</taxon>
        <taxon>Alcanivorax</taxon>
    </lineage>
</organism>
<comment type="function">
    <text evidence="1">Part of a membrane-bound complex that couples electron transfer with translocation of ions across the membrane.</text>
</comment>
<comment type="subunit">
    <text evidence="1">The complex is composed of six subunits: RnfA, RnfB, RnfC, RnfD, RnfE and RnfG.</text>
</comment>
<comment type="subcellular location">
    <subcellularLocation>
        <location evidence="1">Cell inner membrane</location>
        <topology evidence="1">Multi-pass membrane protein</topology>
    </subcellularLocation>
</comment>
<comment type="similarity">
    <text evidence="1">Belongs to the NqrDE/RnfAE family.</text>
</comment>